<keyword id="KW-0030">Aminoacyl-tRNA synthetase</keyword>
<keyword id="KW-0067">ATP-binding</keyword>
<keyword id="KW-0963">Cytoplasm</keyword>
<keyword id="KW-0436">Ligase</keyword>
<keyword id="KW-0547">Nucleotide-binding</keyword>
<keyword id="KW-0648">Protein biosynthesis</keyword>
<keyword id="KW-1185">Reference proteome</keyword>
<feature type="chain" id="PRO_1000018061" description="Arginine--tRNA ligase">
    <location>
        <begin position="1"/>
        <end position="558"/>
    </location>
</feature>
<feature type="short sequence motif" description="'HIGH' region">
    <location>
        <begin position="116"/>
        <end position="126"/>
    </location>
</feature>
<dbReference type="EC" id="6.1.1.19" evidence="1"/>
<dbReference type="EMBL" id="CP000559">
    <property type="protein sequence ID" value="ABN07672.1"/>
    <property type="molecule type" value="Genomic_DNA"/>
</dbReference>
<dbReference type="RefSeq" id="WP_011833875.1">
    <property type="nucleotide sequence ID" value="NC_008942.1"/>
</dbReference>
<dbReference type="SMR" id="A2STL6"/>
<dbReference type="STRING" id="410358.Mlab_1508"/>
<dbReference type="GeneID" id="4795221"/>
<dbReference type="KEGG" id="mla:Mlab_1508"/>
<dbReference type="eggNOG" id="arCOG00487">
    <property type="taxonomic scope" value="Archaea"/>
</dbReference>
<dbReference type="HOGENOM" id="CLU_006406_6_1_2"/>
<dbReference type="OrthoDB" id="372102at2157"/>
<dbReference type="Proteomes" id="UP000000365">
    <property type="component" value="Chromosome"/>
</dbReference>
<dbReference type="GO" id="GO:0005737">
    <property type="term" value="C:cytoplasm"/>
    <property type="evidence" value="ECO:0007669"/>
    <property type="project" value="UniProtKB-SubCell"/>
</dbReference>
<dbReference type="GO" id="GO:0004814">
    <property type="term" value="F:arginine-tRNA ligase activity"/>
    <property type="evidence" value="ECO:0007669"/>
    <property type="project" value="UniProtKB-UniRule"/>
</dbReference>
<dbReference type="GO" id="GO:0005524">
    <property type="term" value="F:ATP binding"/>
    <property type="evidence" value="ECO:0007669"/>
    <property type="project" value="UniProtKB-UniRule"/>
</dbReference>
<dbReference type="GO" id="GO:0006420">
    <property type="term" value="P:arginyl-tRNA aminoacylation"/>
    <property type="evidence" value="ECO:0007669"/>
    <property type="project" value="UniProtKB-UniRule"/>
</dbReference>
<dbReference type="CDD" id="cd07956">
    <property type="entry name" value="Anticodon_Ia_Arg"/>
    <property type="match status" value="1"/>
</dbReference>
<dbReference type="FunFam" id="1.10.730.10:FF:000006">
    <property type="entry name" value="Arginyl-tRNA synthetase 2, mitochondrial"/>
    <property type="match status" value="1"/>
</dbReference>
<dbReference type="Gene3D" id="3.30.1360.70">
    <property type="entry name" value="Arginyl tRNA synthetase N-terminal domain"/>
    <property type="match status" value="1"/>
</dbReference>
<dbReference type="Gene3D" id="3.40.50.620">
    <property type="entry name" value="HUPs"/>
    <property type="match status" value="1"/>
</dbReference>
<dbReference type="Gene3D" id="1.10.730.10">
    <property type="entry name" value="Isoleucyl-tRNA Synthetase, Domain 1"/>
    <property type="match status" value="1"/>
</dbReference>
<dbReference type="HAMAP" id="MF_00123">
    <property type="entry name" value="Arg_tRNA_synth"/>
    <property type="match status" value="1"/>
</dbReference>
<dbReference type="InterPro" id="IPR001412">
    <property type="entry name" value="aa-tRNA-synth_I_CS"/>
</dbReference>
<dbReference type="InterPro" id="IPR001278">
    <property type="entry name" value="Arg-tRNA-ligase"/>
</dbReference>
<dbReference type="InterPro" id="IPR005148">
    <property type="entry name" value="Arg-tRNA-synth_N"/>
</dbReference>
<dbReference type="InterPro" id="IPR036695">
    <property type="entry name" value="Arg-tRNA-synth_N_sf"/>
</dbReference>
<dbReference type="InterPro" id="IPR035684">
    <property type="entry name" value="ArgRS_core"/>
</dbReference>
<dbReference type="InterPro" id="IPR008909">
    <property type="entry name" value="DALR_anticod-bd"/>
</dbReference>
<dbReference type="InterPro" id="IPR014729">
    <property type="entry name" value="Rossmann-like_a/b/a_fold"/>
</dbReference>
<dbReference type="InterPro" id="IPR009080">
    <property type="entry name" value="tRNAsynth_Ia_anticodon-bd"/>
</dbReference>
<dbReference type="NCBIfam" id="TIGR00456">
    <property type="entry name" value="argS"/>
    <property type="match status" value="1"/>
</dbReference>
<dbReference type="PANTHER" id="PTHR11956:SF5">
    <property type="entry name" value="ARGININE--TRNA LIGASE, CYTOPLASMIC"/>
    <property type="match status" value="1"/>
</dbReference>
<dbReference type="PANTHER" id="PTHR11956">
    <property type="entry name" value="ARGINYL-TRNA SYNTHETASE"/>
    <property type="match status" value="1"/>
</dbReference>
<dbReference type="Pfam" id="PF03485">
    <property type="entry name" value="Arg_tRNA_synt_N"/>
    <property type="match status" value="1"/>
</dbReference>
<dbReference type="Pfam" id="PF05746">
    <property type="entry name" value="DALR_1"/>
    <property type="match status" value="1"/>
</dbReference>
<dbReference type="Pfam" id="PF00750">
    <property type="entry name" value="tRNA-synt_1d"/>
    <property type="match status" value="1"/>
</dbReference>
<dbReference type="PRINTS" id="PR01038">
    <property type="entry name" value="TRNASYNTHARG"/>
</dbReference>
<dbReference type="SMART" id="SM01016">
    <property type="entry name" value="Arg_tRNA_synt_N"/>
    <property type="match status" value="1"/>
</dbReference>
<dbReference type="SMART" id="SM00836">
    <property type="entry name" value="DALR_1"/>
    <property type="match status" value="1"/>
</dbReference>
<dbReference type="SUPFAM" id="SSF47323">
    <property type="entry name" value="Anticodon-binding domain of a subclass of class I aminoacyl-tRNA synthetases"/>
    <property type="match status" value="1"/>
</dbReference>
<dbReference type="SUPFAM" id="SSF55190">
    <property type="entry name" value="Arginyl-tRNA synthetase (ArgRS), N-terminal 'additional' domain"/>
    <property type="match status" value="1"/>
</dbReference>
<dbReference type="SUPFAM" id="SSF52374">
    <property type="entry name" value="Nucleotidylyl transferase"/>
    <property type="match status" value="1"/>
</dbReference>
<dbReference type="PROSITE" id="PS00178">
    <property type="entry name" value="AA_TRNA_LIGASE_I"/>
    <property type="match status" value="1"/>
</dbReference>
<name>SYR_METLZ</name>
<sequence length="558" mass="62504">MYREYIQKTIDLLREATGLEDVMITDGGDHADLASTVSFALAKTQRKNPAVIAGELVAVLSAKPEAKGIEISAKGPYINFIFGGDYVAESVHAARREDYGTLPARTDKVIIEHTSANPNGPLHVGHIRNTVIGDTLVRAFRKAGYPVEAQYYLNDMGRQIAIVAWGVQNLHYDRIPGEKGDEYIVRHYVEANKIAKAKPEIEPEFDLLMEKIEAGDPETVKLFHDSVDICADGIKETLSSMNVVHDKFVRETTFLWNGSMQDVLNRIEKLPIVHHEGQMMYLDLSDEGFGNRYVLRRSNGTSVYAARDLAFHLWKNAQCDRSIDVLGADHKLIGAQLQTTLKLIGERPPEIVHFEFVSLPEGSMTTRGGVFITADELIAETKKRAMEEVTVRRPELGEDEREKIAKAVAVGAVRYDIVKVSAEKSTVFDWKEALDFERQSAPYIQYAHARACSIMEKAKAEGGFAECYEYSDPYELALAKHIARFPYVLEKVVCELRPHLLATYVRDLADLFNSFYRFAPVLKAEGNVRDARLTLVDACRNTLYQALGVLGIEALESM</sequence>
<evidence type="ECO:0000255" key="1">
    <source>
        <dbReference type="HAMAP-Rule" id="MF_00123"/>
    </source>
</evidence>
<protein>
    <recommendedName>
        <fullName evidence="1">Arginine--tRNA ligase</fullName>
        <ecNumber evidence="1">6.1.1.19</ecNumber>
    </recommendedName>
    <alternativeName>
        <fullName evidence="1">Arginyl-tRNA synthetase</fullName>
        <shortName evidence="1">ArgRS</shortName>
    </alternativeName>
</protein>
<comment type="catalytic activity">
    <reaction evidence="1">
        <text>tRNA(Arg) + L-arginine + ATP = L-arginyl-tRNA(Arg) + AMP + diphosphate</text>
        <dbReference type="Rhea" id="RHEA:20301"/>
        <dbReference type="Rhea" id="RHEA-COMP:9658"/>
        <dbReference type="Rhea" id="RHEA-COMP:9673"/>
        <dbReference type="ChEBI" id="CHEBI:30616"/>
        <dbReference type="ChEBI" id="CHEBI:32682"/>
        <dbReference type="ChEBI" id="CHEBI:33019"/>
        <dbReference type="ChEBI" id="CHEBI:78442"/>
        <dbReference type="ChEBI" id="CHEBI:78513"/>
        <dbReference type="ChEBI" id="CHEBI:456215"/>
        <dbReference type="EC" id="6.1.1.19"/>
    </reaction>
</comment>
<comment type="subcellular location">
    <subcellularLocation>
        <location evidence="1">Cytoplasm</location>
    </subcellularLocation>
</comment>
<comment type="similarity">
    <text evidence="1">Belongs to the class-I aminoacyl-tRNA synthetase family.</text>
</comment>
<organism>
    <name type="scientific">Methanocorpusculum labreanum (strain ATCC 43576 / DSM 4855 / Z)</name>
    <dbReference type="NCBI Taxonomy" id="410358"/>
    <lineage>
        <taxon>Archaea</taxon>
        <taxon>Methanobacteriati</taxon>
        <taxon>Methanobacteriota</taxon>
        <taxon>Stenosarchaea group</taxon>
        <taxon>Methanomicrobia</taxon>
        <taxon>Methanomicrobiales</taxon>
        <taxon>Methanocorpusculaceae</taxon>
        <taxon>Methanocorpusculum</taxon>
    </lineage>
</organism>
<accession>A2STL6</accession>
<proteinExistence type="inferred from homology"/>
<gene>
    <name evidence="1" type="primary">argS</name>
    <name type="ordered locus">Mlab_1508</name>
</gene>
<reference key="1">
    <citation type="journal article" date="2009" name="Stand. Genomic Sci.">
        <title>Complete genome sequence of Methanocorpusculum labreanum type strain Z.</title>
        <authorList>
            <person name="Anderson I.J."/>
            <person name="Sieprawska-Lupa M."/>
            <person name="Goltsman E."/>
            <person name="Lapidus A."/>
            <person name="Copeland A."/>
            <person name="Glavina Del Rio T."/>
            <person name="Tice H."/>
            <person name="Dalin E."/>
            <person name="Barry K."/>
            <person name="Pitluck S."/>
            <person name="Hauser L."/>
            <person name="Land M."/>
            <person name="Lucas S."/>
            <person name="Richardson P."/>
            <person name="Whitman W.B."/>
            <person name="Kyrpides N.C."/>
        </authorList>
    </citation>
    <scope>NUCLEOTIDE SEQUENCE [LARGE SCALE GENOMIC DNA]</scope>
    <source>
        <strain>ATCC 43576 / DSM 4855 / Z</strain>
    </source>
</reference>